<keyword id="KW-0021">Allosteric enzyme</keyword>
<keyword id="KW-0963">Cytoplasm</keyword>
<keyword id="KW-0378">Hydrolase</keyword>
<keyword id="KW-0479">Metal-binding</keyword>
<keyword id="KW-0645">Protease</keyword>
<keyword id="KW-1185">Reference proteome</keyword>
<keyword id="KW-0915">Sodium</keyword>
<keyword id="KW-0346">Stress response</keyword>
<keyword id="KW-0888">Threonine protease</keyword>
<protein>
    <recommendedName>
        <fullName evidence="1">ATP-dependent protease subunit HslV</fullName>
        <ecNumber evidence="1">3.4.25.2</ecNumber>
    </recommendedName>
    <alternativeName>
        <fullName evidence="1">Heat shock protein HslV</fullName>
    </alternativeName>
</protein>
<sequence>MTTIVSVRRNGHVVIAGDGQATLGNTVMKGNVKKVRRLYNDKVIAGFAGGTADAFTLFELFERKLEMHQGHLIKAAVELAKDWRTDRMLRKLEALLAVADETASLIITGNGDVVQPENDLIAIGSGGPYAQAAARALLENTELSAREIAEKALDIAGDICIYTNHFHTIEELSYKA</sequence>
<feature type="chain" id="PRO_1000012605" description="ATP-dependent protease subunit HslV">
    <location>
        <begin position="1"/>
        <end position="176"/>
    </location>
</feature>
<feature type="active site" evidence="1">
    <location>
        <position position="2"/>
    </location>
</feature>
<feature type="binding site" evidence="1">
    <location>
        <position position="157"/>
    </location>
    <ligand>
        <name>Na(+)</name>
        <dbReference type="ChEBI" id="CHEBI:29101"/>
    </ligand>
</feature>
<feature type="binding site" evidence="1">
    <location>
        <position position="160"/>
    </location>
    <ligand>
        <name>Na(+)</name>
        <dbReference type="ChEBI" id="CHEBI:29101"/>
    </ligand>
</feature>
<feature type="binding site" evidence="1">
    <location>
        <position position="163"/>
    </location>
    <ligand>
        <name>Na(+)</name>
        <dbReference type="ChEBI" id="CHEBI:29101"/>
    </ligand>
</feature>
<accession>A1AIA7</accession>
<comment type="function">
    <text evidence="1">Protease subunit of a proteasome-like degradation complex believed to be a general protein degrading machinery.</text>
</comment>
<comment type="catalytic activity">
    <reaction evidence="1">
        <text>ATP-dependent cleavage of peptide bonds with broad specificity.</text>
        <dbReference type="EC" id="3.4.25.2"/>
    </reaction>
</comment>
<comment type="activity regulation">
    <text evidence="1">Allosterically activated by HslU binding.</text>
</comment>
<comment type="subunit">
    <text evidence="1">A double ring-shaped homohexamer of HslV is capped on each side by a ring-shaped HslU homohexamer. The assembly of the HslU/HslV complex is dependent on binding of ATP.</text>
</comment>
<comment type="subcellular location">
    <subcellularLocation>
        <location evidence="1">Cytoplasm</location>
    </subcellularLocation>
</comment>
<comment type="induction">
    <text evidence="1">By heat shock.</text>
</comment>
<comment type="similarity">
    <text evidence="1">Belongs to the peptidase T1B family. HslV subfamily.</text>
</comment>
<name>HSLV_ECOK1</name>
<reference key="1">
    <citation type="journal article" date="2007" name="J. Bacteriol.">
        <title>The genome sequence of avian pathogenic Escherichia coli strain O1:K1:H7 shares strong similarities with human extraintestinal pathogenic E. coli genomes.</title>
        <authorList>
            <person name="Johnson T.J."/>
            <person name="Kariyawasam S."/>
            <person name="Wannemuehler Y."/>
            <person name="Mangiamele P."/>
            <person name="Johnson S.J."/>
            <person name="Doetkott C."/>
            <person name="Skyberg J.A."/>
            <person name="Lynne A.M."/>
            <person name="Johnson J.R."/>
            <person name="Nolan L.K."/>
        </authorList>
    </citation>
    <scope>NUCLEOTIDE SEQUENCE [LARGE SCALE GENOMIC DNA]</scope>
</reference>
<dbReference type="EC" id="3.4.25.2" evidence="1"/>
<dbReference type="EMBL" id="CP000468">
    <property type="protein sequence ID" value="ABJ03397.1"/>
    <property type="molecule type" value="Genomic_DNA"/>
</dbReference>
<dbReference type="RefSeq" id="WP_000208235.1">
    <property type="nucleotide sequence ID" value="NZ_CADILS010000014.1"/>
</dbReference>
<dbReference type="SMR" id="A1AIA7"/>
<dbReference type="MEROPS" id="T01.006"/>
<dbReference type="KEGG" id="ecv:APECO1_2538"/>
<dbReference type="HOGENOM" id="CLU_093872_1_0_6"/>
<dbReference type="Proteomes" id="UP000008216">
    <property type="component" value="Chromosome"/>
</dbReference>
<dbReference type="GO" id="GO:0009376">
    <property type="term" value="C:HslUV protease complex"/>
    <property type="evidence" value="ECO:0007669"/>
    <property type="project" value="UniProtKB-UniRule"/>
</dbReference>
<dbReference type="GO" id="GO:0005839">
    <property type="term" value="C:proteasome core complex"/>
    <property type="evidence" value="ECO:0007669"/>
    <property type="project" value="InterPro"/>
</dbReference>
<dbReference type="GO" id="GO:0046872">
    <property type="term" value="F:metal ion binding"/>
    <property type="evidence" value="ECO:0007669"/>
    <property type="project" value="UniProtKB-KW"/>
</dbReference>
<dbReference type="GO" id="GO:0004298">
    <property type="term" value="F:threonine-type endopeptidase activity"/>
    <property type="evidence" value="ECO:0007669"/>
    <property type="project" value="UniProtKB-KW"/>
</dbReference>
<dbReference type="GO" id="GO:0051603">
    <property type="term" value="P:proteolysis involved in protein catabolic process"/>
    <property type="evidence" value="ECO:0007669"/>
    <property type="project" value="InterPro"/>
</dbReference>
<dbReference type="CDD" id="cd01913">
    <property type="entry name" value="protease_HslV"/>
    <property type="match status" value="1"/>
</dbReference>
<dbReference type="FunFam" id="3.60.20.10:FF:000002">
    <property type="entry name" value="ATP-dependent protease subunit HslV"/>
    <property type="match status" value="1"/>
</dbReference>
<dbReference type="Gene3D" id="3.60.20.10">
    <property type="entry name" value="Glutamine Phosphoribosylpyrophosphate, subunit 1, domain 1"/>
    <property type="match status" value="1"/>
</dbReference>
<dbReference type="HAMAP" id="MF_00248">
    <property type="entry name" value="HslV"/>
    <property type="match status" value="1"/>
</dbReference>
<dbReference type="InterPro" id="IPR022281">
    <property type="entry name" value="ATP-dep_Prtase_HsIV_su"/>
</dbReference>
<dbReference type="InterPro" id="IPR029055">
    <property type="entry name" value="Ntn_hydrolases_N"/>
</dbReference>
<dbReference type="InterPro" id="IPR001353">
    <property type="entry name" value="Proteasome_sua/b"/>
</dbReference>
<dbReference type="InterPro" id="IPR023333">
    <property type="entry name" value="Proteasome_suB-type"/>
</dbReference>
<dbReference type="NCBIfam" id="TIGR03692">
    <property type="entry name" value="ATP_dep_HslV"/>
    <property type="match status" value="1"/>
</dbReference>
<dbReference type="NCBIfam" id="NF003964">
    <property type="entry name" value="PRK05456.1"/>
    <property type="match status" value="1"/>
</dbReference>
<dbReference type="PANTHER" id="PTHR32194:SF0">
    <property type="entry name" value="ATP-DEPENDENT PROTEASE SUBUNIT HSLV"/>
    <property type="match status" value="1"/>
</dbReference>
<dbReference type="PANTHER" id="PTHR32194">
    <property type="entry name" value="METALLOPROTEASE TLDD"/>
    <property type="match status" value="1"/>
</dbReference>
<dbReference type="Pfam" id="PF00227">
    <property type="entry name" value="Proteasome"/>
    <property type="match status" value="1"/>
</dbReference>
<dbReference type="PIRSF" id="PIRSF039093">
    <property type="entry name" value="HslV"/>
    <property type="match status" value="1"/>
</dbReference>
<dbReference type="SUPFAM" id="SSF56235">
    <property type="entry name" value="N-terminal nucleophile aminohydrolases (Ntn hydrolases)"/>
    <property type="match status" value="1"/>
</dbReference>
<dbReference type="PROSITE" id="PS51476">
    <property type="entry name" value="PROTEASOME_BETA_2"/>
    <property type="match status" value="1"/>
</dbReference>
<proteinExistence type="inferred from homology"/>
<organism>
    <name type="scientific">Escherichia coli O1:K1 / APEC</name>
    <dbReference type="NCBI Taxonomy" id="405955"/>
    <lineage>
        <taxon>Bacteria</taxon>
        <taxon>Pseudomonadati</taxon>
        <taxon>Pseudomonadota</taxon>
        <taxon>Gammaproteobacteria</taxon>
        <taxon>Enterobacterales</taxon>
        <taxon>Enterobacteriaceae</taxon>
        <taxon>Escherichia</taxon>
    </lineage>
</organism>
<evidence type="ECO:0000255" key="1">
    <source>
        <dbReference type="HAMAP-Rule" id="MF_00248"/>
    </source>
</evidence>
<gene>
    <name evidence="1" type="primary">hslV</name>
    <name type="ordered locus">Ecok1_39030</name>
    <name type="ORF">APECO1_2538</name>
</gene>